<feature type="chain" id="PRO_0000355335" description="D-tagatose-1,6-bisphosphate aldolase subunit GatY">
    <location>
        <begin position="1"/>
        <end position="284"/>
    </location>
</feature>
<feature type="active site" description="Proton donor" evidence="1">
    <location>
        <position position="82"/>
    </location>
</feature>
<feature type="binding site" evidence="1">
    <location>
        <position position="83"/>
    </location>
    <ligand>
        <name>Zn(2+)</name>
        <dbReference type="ChEBI" id="CHEBI:29105"/>
        <note>catalytic</note>
    </ligand>
</feature>
<feature type="binding site" evidence="1">
    <location>
        <position position="180"/>
    </location>
    <ligand>
        <name>Zn(2+)</name>
        <dbReference type="ChEBI" id="CHEBI:29105"/>
        <note>catalytic</note>
    </ligand>
</feature>
<feature type="binding site" evidence="1">
    <location>
        <position position="181"/>
    </location>
    <ligand>
        <name>dihydroxyacetone phosphate</name>
        <dbReference type="ChEBI" id="CHEBI:57642"/>
    </ligand>
</feature>
<feature type="binding site" evidence="1">
    <location>
        <position position="208"/>
    </location>
    <ligand>
        <name>Zn(2+)</name>
        <dbReference type="ChEBI" id="CHEBI:29105"/>
        <note>catalytic</note>
    </ligand>
</feature>
<feature type="binding site" evidence="1">
    <location>
        <begin position="209"/>
        <end position="211"/>
    </location>
    <ligand>
        <name>dihydroxyacetone phosphate</name>
        <dbReference type="ChEBI" id="CHEBI:57642"/>
    </ligand>
</feature>
<feature type="binding site" evidence="1">
    <location>
        <begin position="230"/>
        <end position="233"/>
    </location>
    <ligand>
        <name>dihydroxyacetone phosphate</name>
        <dbReference type="ChEBI" id="CHEBI:57642"/>
    </ligand>
</feature>
<proteinExistence type="inferred from homology"/>
<evidence type="ECO:0000255" key="1">
    <source>
        <dbReference type="HAMAP-Rule" id="MF_01294"/>
    </source>
</evidence>
<keyword id="KW-0298">Galactitol metabolism</keyword>
<keyword id="KW-0456">Lyase</keyword>
<keyword id="KW-0479">Metal-binding</keyword>
<keyword id="KW-0862">Zinc</keyword>
<reference key="1">
    <citation type="journal article" date="2008" name="J. Bacteriol.">
        <title>The pangenome structure of Escherichia coli: comparative genomic analysis of E. coli commensal and pathogenic isolates.</title>
        <authorList>
            <person name="Rasko D.A."/>
            <person name="Rosovitz M.J."/>
            <person name="Myers G.S.A."/>
            <person name="Mongodin E.F."/>
            <person name="Fricke W.F."/>
            <person name="Gajer P."/>
            <person name="Crabtree J."/>
            <person name="Sebaihia M."/>
            <person name="Thomson N.R."/>
            <person name="Chaudhuri R."/>
            <person name="Henderson I.R."/>
            <person name="Sperandio V."/>
            <person name="Ravel J."/>
        </authorList>
    </citation>
    <scope>NUCLEOTIDE SEQUENCE [LARGE SCALE GENOMIC DNA]</scope>
    <source>
        <strain>HS</strain>
    </source>
</reference>
<gene>
    <name evidence="1" type="primary">gatY</name>
    <name type="ordered locus">EcHS_A2232</name>
</gene>
<organism>
    <name type="scientific">Escherichia coli O9:H4 (strain HS)</name>
    <dbReference type="NCBI Taxonomy" id="331112"/>
    <lineage>
        <taxon>Bacteria</taxon>
        <taxon>Pseudomonadati</taxon>
        <taxon>Pseudomonadota</taxon>
        <taxon>Gammaproteobacteria</taxon>
        <taxon>Enterobacterales</taxon>
        <taxon>Enterobacteriaceae</taxon>
        <taxon>Escherichia</taxon>
    </lineage>
</organism>
<dbReference type="EC" id="4.1.2.40" evidence="1"/>
<dbReference type="EMBL" id="CP000802">
    <property type="protein sequence ID" value="ABV06515.1"/>
    <property type="molecule type" value="Genomic_DNA"/>
</dbReference>
<dbReference type="RefSeq" id="WP_001307281.1">
    <property type="nucleotide sequence ID" value="NC_009800.1"/>
</dbReference>
<dbReference type="SMR" id="A8A1W1"/>
<dbReference type="KEGG" id="ecx:EcHS_A2232"/>
<dbReference type="HOGENOM" id="CLU_040088_0_1_6"/>
<dbReference type="UniPathway" id="UPA00704">
    <property type="reaction ID" value="UER00716"/>
</dbReference>
<dbReference type="GO" id="GO:0005829">
    <property type="term" value="C:cytosol"/>
    <property type="evidence" value="ECO:0007669"/>
    <property type="project" value="TreeGrafter"/>
</dbReference>
<dbReference type="GO" id="GO:0009025">
    <property type="term" value="F:tagatose-bisphosphate aldolase activity"/>
    <property type="evidence" value="ECO:0007669"/>
    <property type="project" value="UniProtKB-UniRule"/>
</dbReference>
<dbReference type="GO" id="GO:0008270">
    <property type="term" value="F:zinc ion binding"/>
    <property type="evidence" value="ECO:0007669"/>
    <property type="project" value="UniProtKB-UniRule"/>
</dbReference>
<dbReference type="GO" id="GO:2001059">
    <property type="term" value="P:D-tagatose 6-phosphate catabolic process"/>
    <property type="evidence" value="ECO:0007669"/>
    <property type="project" value="UniProtKB-UniRule"/>
</dbReference>
<dbReference type="GO" id="GO:0019404">
    <property type="term" value="P:galactitol catabolic process"/>
    <property type="evidence" value="ECO:0007669"/>
    <property type="project" value="InterPro"/>
</dbReference>
<dbReference type="CDD" id="cd00947">
    <property type="entry name" value="TBP_aldolase_IIB"/>
    <property type="match status" value="1"/>
</dbReference>
<dbReference type="FunFam" id="3.20.20.70:FF:000043">
    <property type="entry name" value="D-tagatose-1,6-bisphosphate aldolase subunit GatY"/>
    <property type="match status" value="1"/>
</dbReference>
<dbReference type="Gene3D" id="3.20.20.70">
    <property type="entry name" value="Aldolase class I"/>
    <property type="match status" value="1"/>
</dbReference>
<dbReference type="HAMAP" id="MF_01294">
    <property type="entry name" value="TagBP_aldolase_GatY"/>
    <property type="match status" value="1"/>
</dbReference>
<dbReference type="InterPro" id="IPR013785">
    <property type="entry name" value="Aldolase_TIM"/>
</dbReference>
<dbReference type="InterPro" id="IPR050246">
    <property type="entry name" value="Class_II_FBP_aldolase"/>
</dbReference>
<dbReference type="InterPro" id="IPR000771">
    <property type="entry name" value="FBA_II"/>
</dbReference>
<dbReference type="InterPro" id="IPR011288">
    <property type="entry name" value="TagBP_ald_KbaY/GatY"/>
</dbReference>
<dbReference type="InterPro" id="IPR023955">
    <property type="entry name" value="TagBP_aldolase_GatY"/>
</dbReference>
<dbReference type="NCBIfam" id="TIGR00167">
    <property type="entry name" value="cbbA"/>
    <property type="match status" value="1"/>
</dbReference>
<dbReference type="NCBIfam" id="NF006626">
    <property type="entry name" value="PRK09195.1"/>
    <property type="match status" value="1"/>
</dbReference>
<dbReference type="NCBIfam" id="NF009374">
    <property type="entry name" value="PRK12737.1"/>
    <property type="match status" value="1"/>
</dbReference>
<dbReference type="NCBIfam" id="TIGR01858">
    <property type="entry name" value="tag_bisphos_ald"/>
    <property type="match status" value="1"/>
</dbReference>
<dbReference type="PANTHER" id="PTHR30304">
    <property type="entry name" value="D-TAGATOSE-1,6-BISPHOSPHATE ALDOLASE"/>
    <property type="match status" value="1"/>
</dbReference>
<dbReference type="PANTHER" id="PTHR30304:SF0">
    <property type="entry name" value="D-TAGATOSE-1,6-BISPHOSPHATE ALDOLASE SUBUNIT GATY-RELATED"/>
    <property type="match status" value="1"/>
</dbReference>
<dbReference type="Pfam" id="PF01116">
    <property type="entry name" value="F_bP_aldolase"/>
    <property type="match status" value="1"/>
</dbReference>
<dbReference type="PIRSF" id="PIRSF001359">
    <property type="entry name" value="F_bP_aldolase_II"/>
    <property type="match status" value="1"/>
</dbReference>
<dbReference type="SUPFAM" id="SSF51569">
    <property type="entry name" value="Aldolase"/>
    <property type="match status" value="1"/>
</dbReference>
<dbReference type="PROSITE" id="PS00602">
    <property type="entry name" value="ALDOLASE_CLASS_II_1"/>
    <property type="match status" value="1"/>
</dbReference>
<dbReference type="PROSITE" id="PS00806">
    <property type="entry name" value="ALDOLASE_CLASS_II_2"/>
    <property type="match status" value="1"/>
</dbReference>
<accession>A8A1W1</accession>
<protein>
    <recommendedName>
        <fullName evidence="1">D-tagatose-1,6-bisphosphate aldolase subunit GatY</fullName>
        <shortName evidence="1">TBPA</shortName>
        <shortName evidence="1">TagBP aldolase</shortName>
        <ecNumber evidence="1">4.1.2.40</ecNumber>
    </recommendedName>
    <alternativeName>
        <fullName evidence="1">D-tagatose-bisphosphate aldolase class II</fullName>
    </alternativeName>
    <alternativeName>
        <fullName evidence="1">Tagatose-bisphosphate aldolase</fullName>
    </alternativeName>
</protein>
<name>GATY_ECOHS</name>
<sequence>MYVVSTKQMLNNAQRGGYAVPAFNIHNLETMQVVVETAANLHAPVIIAGTPGTFTHAGTENLLALVSAMAKQYHHPLAIHLDHHTKFDDIAQKVRSGVRSVMIDASHLPFAQNISRVKEVVDFCHRFDVSVEAELGQLGGQEDDVQVNEADALYTNPAQAREFAEATGIDSLAVAIGTAHGMYASAPALDFSRLENIRQWVNLPLVLHGASGLSTKDIQQTIKLGICKINVATELKNAFSQALKNYLTEHPEATDPRDYLQSAKSAMRDVVSKVIADCGCEGRA</sequence>
<comment type="function">
    <text evidence="1">Catalytic subunit of the tagatose-1,6-bisphosphate aldolase GatYZ, which catalyzes the reversible aldol condensation of dihydroxyacetone phosphate (DHAP or glycerone-phosphate) with glyceraldehyde 3-phosphate (G3P) to produce tagatose 1,6-bisphosphate (TBP). Requires GatZ subunit for full activity and stability. Is involved in the catabolism of galactitol.</text>
</comment>
<comment type="catalytic activity">
    <reaction evidence="1">
        <text>D-tagatofuranose 1,6-bisphosphate = D-glyceraldehyde 3-phosphate + dihydroxyacetone phosphate</text>
        <dbReference type="Rhea" id="RHEA:22948"/>
        <dbReference type="ChEBI" id="CHEBI:57642"/>
        <dbReference type="ChEBI" id="CHEBI:58694"/>
        <dbReference type="ChEBI" id="CHEBI:59776"/>
        <dbReference type="EC" id="4.1.2.40"/>
    </reaction>
</comment>
<comment type="cofactor">
    <cofactor evidence="1">
        <name>Zn(2+)</name>
        <dbReference type="ChEBI" id="CHEBI:29105"/>
    </cofactor>
    <text evidence="1">Binds 1 zinc ion per subunit.</text>
</comment>
<comment type="pathway">
    <text evidence="1">Carbohydrate metabolism; D-tagatose 6-phosphate degradation; D-glyceraldehyde 3-phosphate and glycerone phosphate from D-tagatose 6-phosphate: step 2/2.</text>
</comment>
<comment type="subunit">
    <text evidence="1">Forms a complex with GatZ.</text>
</comment>
<comment type="similarity">
    <text evidence="1">Belongs to the class II fructose-bisphosphate aldolase family. TagBP aldolase GatY subfamily.</text>
</comment>